<accession>Q97J61</accession>
<name>DUT_CLOAB</name>
<gene>
    <name evidence="1" type="primary">dut</name>
    <name type="ordered locus">CA_C1425</name>
</gene>
<feature type="chain" id="PRO_0000182850" description="Deoxyuridine 5'-triphosphate nucleotidohydrolase">
    <location>
        <begin position="1"/>
        <end position="145"/>
    </location>
</feature>
<feature type="binding site" evidence="1">
    <location>
        <begin position="63"/>
        <end position="65"/>
    </location>
    <ligand>
        <name>substrate</name>
    </ligand>
</feature>
<feature type="binding site" evidence="1">
    <location>
        <position position="76"/>
    </location>
    <ligand>
        <name>substrate</name>
    </ligand>
</feature>
<feature type="binding site" evidence="1">
    <location>
        <begin position="80"/>
        <end position="82"/>
    </location>
    <ligand>
        <name>substrate</name>
    </ligand>
</feature>
<feature type="binding site" evidence="1">
    <location>
        <position position="90"/>
    </location>
    <ligand>
        <name>substrate</name>
    </ligand>
</feature>
<proteinExistence type="inferred from homology"/>
<protein>
    <recommendedName>
        <fullName evidence="1">Deoxyuridine 5'-triphosphate nucleotidohydrolase</fullName>
        <shortName evidence="1">dUTPase</shortName>
        <ecNumber evidence="1">3.6.1.23</ecNumber>
    </recommendedName>
    <alternativeName>
        <fullName evidence="1">dUTP pyrophosphatase</fullName>
    </alternativeName>
</protein>
<sequence length="145" mass="15622">MVNLKIKKIDDAAILPECAHEGDAGLDLFSVEEKVIKAGESALIGTGIQMELPPETEAQVRPRSGLALKHSITVLNSPGTIDEGYRGEVKIILINHGKEDFKVEKSMKIAQMVIKPVLKVKVEEVKELSSSDRGTGGFGSTGLKK</sequence>
<evidence type="ECO:0000255" key="1">
    <source>
        <dbReference type="HAMAP-Rule" id="MF_00116"/>
    </source>
</evidence>
<dbReference type="EC" id="3.6.1.23" evidence="1"/>
<dbReference type="EMBL" id="AE001437">
    <property type="protein sequence ID" value="AAK79393.1"/>
    <property type="molecule type" value="Genomic_DNA"/>
</dbReference>
<dbReference type="PIR" id="F97075">
    <property type="entry name" value="F97075"/>
</dbReference>
<dbReference type="RefSeq" id="NP_348053.1">
    <property type="nucleotide sequence ID" value="NC_003030.1"/>
</dbReference>
<dbReference type="RefSeq" id="WP_010964734.1">
    <property type="nucleotide sequence ID" value="NC_003030.1"/>
</dbReference>
<dbReference type="SMR" id="Q97J61"/>
<dbReference type="STRING" id="272562.CA_C1425"/>
<dbReference type="GeneID" id="44997931"/>
<dbReference type="KEGG" id="cac:CA_C1425"/>
<dbReference type="PATRIC" id="fig|272562.8.peg.1630"/>
<dbReference type="eggNOG" id="COG0756">
    <property type="taxonomic scope" value="Bacteria"/>
</dbReference>
<dbReference type="HOGENOM" id="CLU_068508_1_2_9"/>
<dbReference type="OrthoDB" id="9809956at2"/>
<dbReference type="UniPathway" id="UPA00610">
    <property type="reaction ID" value="UER00666"/>
</dbReference>
<dbReference type="Proteomes" id="UP000000814">
    <property type="component" value="Chromosome"/>
</dbReference>
<dbReference type="GO" id="GO:0004170">
    <property type="term" value="F:dUTP diphosphatase activity"/>
    <property type="evidence" value="ECO:0007669"/>
    <property type="project" value="UniProtKB-UniRule"/>
</dbReference>
<dbReference type="GO" id="GO:0000287">
    <property type="term" value="F:magnesium ion binding"/>
    <property type="evidence" value="ECO:0007669"/>
    <property type="project" value="UniProtKB-UniRule"/>
</dbReference>
<dbReference type="GO" id="GO:0006226">
    <property type="term" value="P:dUMP biosynthetic process"/>
    <property type="evidence" value="ECO:0007669"/>
    <property type="project" value="UniProtKB-UniRule"/>
</dbReference>
<dbReference type="GO" id="GO:0046081">
    <property type="term" value="P:dUTP catabolic process"/>
    <property type="evidence" value="ECO:0007669"/>
    <property type="project" value="InterPro"/>
</dbReference>
<dbReference type="CDD" id="cd07557">
    <property type="entry name" value="trimeric_dUTPase"/>
    <property type="match status" value="1"/>
</dbReference>
<dbReference type="FunFam" id="2.70.40.10:FF:000008">
    <property type="entry name" value="Deoxyuridine 5'-triphosphate nucleotidohydrolase"/>
    <property type="match status" value="1"/>
</dbReference>
<dbReference type="Gene3D" id="2.70.40.10">
    <property type="match status" value="1"/>
</dbReference>
<dbReference type="HAMAP" id="MF_00116">
    <property type="entry name" value="dUTPase_bact"/>
    <property type="match status" value="1"/>
</dbReference>
<dbReference type="InterPro" id="IPR008181">
    <property type="entry name" value="dUTPase"/>
</dbReference>
<dbReference type="InterPro" id="IPR029054">
    <property type="entry name" value="dUTPase-like"/>
</dbReference>
<dbReference type="InterPro" id="IPR036157">
    <property type="entry name" value="dUTPase-like_sf"/>
</dbReference>
<dbReference type="InterPro" id="IPR033704">
    <property type="entry name" value="dUTPase_trimeric"/>
</dbReference>
<dbReference type="NCBIfam" id="TIGR00576">
    <property type="entry name" value="dut"/>
    <property type="match status" value="1"/>
</dbReference>
<dbReference type="NCBIfam" id="NF001862">
    <property type="entry name" value="PRK00601.1"/>
    <property type="match status" value="1"/>
</dbReference>
<dbReference type="PANTHER" id="PTHR11241">
    <property type="entry name" value="DEOXYURIDINE 5'-TRIPHOSPHATE NUCLEOTIDOHYDROLASE"/>
    <property type="match status" value="1"/>
</dbReference>
<dbReference type="PANTHER" id="PTHR11241:SF0">
    <property type="entry name" value="DEOXYURIDINE 5'-TRIPHOSPHATE NUCLEOTIDOHYDROLASE"/>
    <property type="match status" value="1"/>
</dbReference>
<dbReference type="Pfam" id="PF00692">
    <property type="entry name" value="dUTPase"/>
    <property type="match status" value="1"/>
</dbReference>
<dbReference type="SUPFAM" id="SSF51283">
    <property type="entry name" value="dUTPase-like"/>
    <property type="match status" value="1"/>
</dbReference>
<comment type="function">
    <text evidence="1">This enzyme is involved in nucleotide metabolism: it produces dUMP, the immediate precursor of thymidine nucleotides and it decreases the intracellular concentration of dUTP so that uracil cannot be incorporated into DNA.</text>
</comment>
<comment type="catalytic activity">
    <reaction evidence="1">
        <text>dUTP + H2O = dUMP + diphosphate + H(+)</text>
        <dbReference type="Rhea" id="RHEA:10248"/>
        <dbReference type="ChEBI" id="CHEBI:15377"/>
        <dbReference type="ChEBI" id="CHEBI:15378"/>
        <dbReference type="ChEBI" id="CHEBI:33019"/>
        <dbReference type="ChEBI" id="CHEBI:61555"/>
        <dbReference type="ChEBI" id="CHEBI:246422"/>
        <dbReference type="EC" id="3.6.1.23"/>
    </reaction>
</comment>
<comment type="cofactor">
    <cofactor evidence="1">
        <name>Mg(2+)</name>
        <dbReference type="ChEBI" id="CHEBI:18420"/>
    </cofactor>
</comment>
<comment type="pathway">
    <text evidence="1">Pyrimidine metabolism; dUMP biosynthesis; dUMP from dCTP (dUTP route): step 2/2.</text>
</comment>
<comment type="similarity">
    <text evidence="1">Belongs to the dUTPase family.</text>
</comment>
<reference key="1">
    <citation type="journal article" date="2001" name="J. Bacteriol.">
        <title>Genome sequence and comparative analysis of the solvent-producing bacterium Clostridium acetobutylicum.</title>
        <authorList>
            <person name="Noelling J."/>
            <person name="Breton G."/>
            <person name="Omelchenko M.V."/>
            <person name="Makarova K.S."/>
            <person name="Zeng Q."/>
            <person name="Gibson R."/>
            <person name="Lee H.M."/>
            <person name="Dubois J."/>
            <person name="Qiu D."/>
            <person name="Hitti J."/>
            <person name="Wolf Y.I."/>
            <person name="Tatusov R.L."/>
            <person name="Sabathe F."/>
            <person name="Doucette-Stamm L.A."/>
            <person name="Soucaille P."/>
            <person name="Daly M.J."/>
            <person name="Bennett G.N."/>
            <person name="Koonin E.V."/>
            <person name="Smith D.R."/>
        </authorList>
    </citation>
    <scope>NUCLEOTIDE SEQUENCE [LARGE SCALE GENOMIC DNA]</scope>
    <source>
        <strain>ATCC 824 / DSM 792 / JCM 1419 / IAM 19013 / LMG 5710 / NBRC 13948 / NRRL B-527 / VKM B-1787 / 2291 / W</strain>
    </source>
</reference>
<keyword id="KW-0378">Hydrolase</keyword>
<keyword id="KW-0460">Magnesium</keyword>
<keyword id="KW-0479">Metal-binding</keyword>
<keyword id="KW-0546">Nucleotide metabolism</keyword>
<keyword id="KW-1185">Reference proteome</keyword>
<organism>
    <name type="scientific">Clostridium acetobutylicum (strain ATCC 824 / DSM 792 / JCM 1419 / IAM 19013 / LMG 5710 / NBRC 13948 / NRRL B-527 / VKM B-1787 / 2291 / W)</name>
    <dbReference type="NCBI Taxonomy" id="272562"/>
    <lineage>
        <taxon>Bacteria</taxon>
        <taxon>Bacillati</taxon>
        <taxon>Bacillota</taxon>
        <taxon>Clostridia</taxon>
        <taxon>Eubacteriales</taxon>
        <taxon>Clostridiaceae</taxon>
        <taxon>Clostridium</taxon>
    </lineage>
</organism>